<sequence>MEQSELMVRRIKEGTVIDHIDEGKGIQVLNALRIDGSDGSLITIALNVPSGKFKKKDIIKVENKFLKDDDTNKLAVIAPKATINMIKDYKLVEKRRVSLPNEIDRIFRCSNPDCVTNSTEHIESIMDVIDKEGRVLKCRYCSRVLDVNQLKYN</sequence>
<comment type="function">
    <text evidence="1">Involved in allosteric regulation of aspartate carbamoyltransferase.</text>
</comment>
<comment type="cofactor">
    <cofactor evidence="1">
        <name>Zn(2+)</name>
        <dbReference type="ChEBI" id="CHEBI:29105"/>
    </cofactor>
    <text evidence="1">Binds 1 zinc ion per subunit.</text>
</comment>
<comment type="subunit">
    <text evidence="1">Contains catalytic and regulatory chains.</text>
</comment>
<comment type="similarity">
    <text evidence="1">Belongs to the PyrI family.</text>
</comment>
<protein>
    <recommendedName>
        <fullName evidence="1">Aspartate carbamoyltransferase regulatory chain</fullName>
    </recommendedName>
</protein>
<name>PYRI_NITMS</name>
<evidence type="ECO:0000255" key="1">
    <source>
        <dbReference type="HAMAP-Rule" id="MF_00002"/>
    </source>
</evidence>
<gene>
    <name evidence="1" type="primary">pyrI</name>
    <name type="ordered locus">Nmar_1687</name>
</gene>
<keyword id="KW-0479">Metal-binding</keyword>
<keyword id="KW-0665">Pyrimidine biosynthesis</keyword>
<keyword id="KW-1185">Reference proteome</keyword>
<keyword id="KW-0862">Zinc</keyword>
<proteinExistence type="inferred from homology"/>
<organism>
    <name type="scientific">Nitrosopumilus maritimus (strain SCM1)</name>
    <dbReference type="NCBI Taxonomy" id="436308"/>
    <lineage>
        <taxon>Archaea</taxon>
        <taxon>Nitrososphaerota</taxon>
        <taxon>Nitrososphaeria</taxon>
        <taxon>Nitrosopumilales</taxon>
        <taxon>Nitrosopumilaceae</taxon>
        <taxon>Nitrosopumilus</taxon>
    </lineage>
</organism>
<accession>A9A2Q6</accession>
<feature type="chain" id="PRO_1000088830" description="Aspartate carbamoyltransferase regulatory chain">
    <location>
        <begin position="1"/>
        <end position="153"/>
    </location>
</feature>
<feature type="binding site" evidence="1">
    <location>
        <position position="109"/>
    </location>
    <ligand>
        <name>Zn(2+)</name>
        <dbReference type="ChEBI" id="CHEBI:29105"/>
    </ligand>
</feature>
<feature type="binding site" evidence="1">
    <location>
        <position position="114"/>
    </location>
    <ligand>
        <name>Zn(2+)</name>
        <dbReference type="ChEBI" id="CHEBI:29105"/>
    </ligand>
</feature>
<feature type="binding site" evidence="1">
    <location>
        <position position="138"/>
    </location>
    <ligand>
        <name>Zn(2+)</name>
        <dbReference type="ChEBI" id="CHEBI:29105"/>
    </ligand>
</feature>
<feature type="binding site" evidence="1">
    <location>
        <position position="141"/>
    </location>
    <ligand>
        <name>Zn(2+)</name>
        <dbReference type="ChEBI" id="CHEBI:29105"/>
    </ligand>
</feature>
<dbReference type="EMBL" id="CP000866">
    <property type="protein sequence ID" value="ABX13583.1"/>
    <property type="molecule type" value="Genomic_DNA"/>
</dbReference>
<dbReference type="RefSeq" id="WP_012216069.1">
    <property type="nucleotide sequence ID" value="NC_010085.1"/>
</dbReference>
<dbReference type="SMR" id="A9A2Q6"/>
<dbReference type="FunCoup" id="A9A2Q6">
    <property type="interactions" value="66"/>
</dbReference>
<dbReference type="STRING" id="436308.Nmar_1687"/>
<dbReference type="EnsemblBacteria" id="ABX13583">
    <property type="protein sequence ID" value="ABX13583"/>
    <property type="gene ID" value="Nmar_1687"/>
</dbReference>
<dbReference type="GeneID" id="5773795"/>
<dbReference type="KEGG" id="nmr:Nmar_1687"/>
<dbReference type="eggNOG" id="arCOG04229">
    <property type="taxonomic scope" value="Archaea"/>
</dbReference>
<dbReference type="HOGENOM" id="CLU_128576_0_0_2"/>
<dbReference type="InParanoid" id="A9A2Q6"/>
<dbReference type="OrthoDB" id="7000at2157"/>
<dbReference type="PhylomeDB" id="A9A2Q6"/>
<dbReference type="Proteomes" id="UP000000792">
    <property type="component" value="Chromosome"/>
</dbReference>
<dbReference type="GO" id="GO:0009347">
    <property type="term" value="C:aspartate carbamoyltransferase complex"/>
    <property type="evidence" value="ECO:0000318"/>
    <property type="project" value="GO_Central"/>
</dbReference>
<dbReference type="GO" id="GO:0046872">
    <property type="term" value="F:metal ion binding"/>
    <property type="evidence" value="ECO:0007669"/>
    <property type="project" value="UniProtKB-KW"/>
</dbReference>
<dbReference type="GO" id="GO:0006207">
    <property type="term" value="P:'de novo' pyrimidine nucleobase biosynthetic process"/>
    <property type="evidence" value="ECO:0000318"/>
    <property type="project" value="GO_Central"/>
</dbReference>
<dbReference type="GO" id="GO:0006221">
    <property type="term" value="P:pyrimidine nucleotide biosynthetic process"/>
    <property type="evidence" value="ECO:0007669"/>
    <property type="project" value="UniProtKB-UniRule"/>
</dbReference>
<dbReference type="Gene3D" id="2.30.30.20">
    <property type="entry name" value="Aspartate carbamoyltransferase regulatory subunit, C-terminal domain"/>
    <property type="match status" value="1"/>
</dbReference>
<dbReference type="Gene3D" id="3.30.70.140">
    <property type="entry name" value="Aspartate carbamoyltransferase regulatory subunit, N-terminal domain"/>
    <property type="match status" value="1"/>
</dbReference>
<dbReference type="HAMAP" id="MF_00002">
    <property type="entry name" value="Asp_carb_tr_reg"/>
    <property type="match status" value="1"/>
</dbReference>
<dbReference type="InterPro" id="IPR020545">
    <property type="entry name" value="Asp_carbamoyltransf_reg_N"/>
</dbReference>
<dbReference type="InterPro" id="IPR002801">
    <property type="entry name" value="Asp_carbamoylTrfase_reg"/>
</dbReference>
<dbReference type="InterPro" id="IPR020542">
    <property type="entry name" value="Asp_carbamoyltrfase_reg_C"/>
</dbReference>
<dbReference type="InterPro" id="IPR036792">
    <property type="entry name" value="Asp_carbatrfase_reg_C_sf"/>
</dbReference>
<dbReference type="InterPro" id="IPR036793">
    <property type="entry name" value="Asp_carbatrfase_reg_N_sf"/>
</dbReference>
<dbReference type="NCBIfam" id="TIGR00240">
    <property type="entry name" value="ATCase_reg"/>
    <property type="match status" value="1"/>
</dbReference>
<dbReference type="PANTHER" id="PTHR35805">
    <property type="entry name" value="ASPARTATE CARBAMOYLTRANSFERASE REGULATORY CHAIN"/>
    <property type="match status" value="1"/>
</dbReference>
<dbReference type="PANTHER" id="PTHR35805:SF1">
    <property type="entry name" value="ASPARTATE CARBAMOYLTRANSFERASE REGULATORY CHAIN"/>
    <property type="match status" value="1"/>
</dbReference>
<dbReference type="Pfam" id="PF01948">
    <property type="entry name" value="PyrI"/>
    <property type="match status" value="1"/>
</dbReference>
<dbReference type="Pfam" id="PF02748">
    <property type="entry name" value="PyrI_C"/>
    <property type="match status" value="1"/>
</dbReference>
<dbReference type="SUPFAM" id="SSF57825">
    <property type="entry name" value="Aspartate carbamoyltransferase, Regulatory-chain, C-terminal domain"/>
    <property type="match status" value="1"/>
</dbReference>
<dbReference type="SUPFAM" id="SSF54893">
    <property type="entry name" value="Aspartate carbamoyltransferase, Regulatory-chain, N-terminal domain"/>
    <property type="match status" value="1"/>
</dbReference>
<reference key="1">
    <citation type="journal article" date="2010" name="Proc. Natl. Acad. Sci. U.S.A.">
        <title>Nitrosopumilus maritimus genome reveals unique mechanisms for nitrification and autotrophy in globally distributed marine crenarchaea.</title>
        <authorList>
            <person name="Walker C.B."/>
            <person name="de la Torre J.R."/>
            <person name="Klotz M.G."/>
            <person name="Urakawa H."/>
            <person name="Pinel N."/>
            <person name="Arp D.J."/>
            <person name="Brochier-Armanet C."/>
            <person name="Chain P.S."/>
            <person name="Chan P.P."/>
            <person name="Gollabgir A."/>
            <person name="Hemp J."/>
            <person name="Hugler M."/>
            <person name="Karr E.A."/>
            <person name="Konneke M."/>
            <person name="Shin M."/>
            <person name="Lawton T.J."/>
            <person name="Lowe T."/>
            <person name="Martens-Habbena W."/>
            <person name="Sayavedra-Soto L.A."/>
            <person name="Lang D."/>
            <person name="Sievert S.M."/>
            <person name="Rosenzweig A.C."/>
            <person name="Manning G."/>
            <person name="Stahl D.A."/>
        </authorList>
    </citation>
    <scope>NUCLEOTIDE SEQUENCE [LARGE SCALE GENOMIC DNA]</scope>
    <source>
        <strain>SCM1</strain>
    </source>
</reference>